<keyword id="KW-0903">Direct protein sequencing</keyword>
<keyword id="KW-0952">Extinct organism protein</keyword>
<keyword id="KW-0272">Extracellular matrix</keyword>
<keyword id="KW-0325">Glycoprotein</keyword>
<keyword id="KW-0379">Hydroxylation</keyword>
<keyword id="KW-0964">Secreted</keyword>
<accession>C0HLH4</accession>
<evidence type="ECO:0000250" key="1">
    <source>
        <dbReference type="UniProtKB" id="P08123"/>
    </source>
</evidence>
<evidence type="ECO:0000256" key="2">
    <source>
        <dbReference type="SAM" id="MobiDB-lite"/>
    </source>
</evidence>
<evidence type="ECO:0000269" key="3">
    <source>
    </source>
</evidence>
<evidence type="ECO:0000303" key="4">
    <source>
    </source>
</evidence>
<evidence type="ECO:0000305" key="5"/>
<sequence length="925" mass="83208">SGGFDFSFLPQPPQEKAHDGGRYYGVGLGPGPMGLMGPRGPPGASGAPGPQGFQGPAGEPGEPGQTGPAGARGPAGPPGKAGGVVGPQGARGFPGTPGLPGFKGIRGHNGLDGLKGQPGAQGVKGEPGAPGENGTPGQTGARGLPGERGRRGSDGSVGPVGPAGPIGSAGPPGFPGAPGPKGELGPVGNTGPAGPAGPRGEQGLPGVSGPVGPPGNPGANGLTGKGAAGLPGVAGAPGLPGPRGIPGPVGASGATGARGLVGEPGPAGSKGESGGKGEPGSAGPQGPPGSSGEEGKRSTGPTGPPGLRGGPGSRGLPGADGRRGPSGDTGRPGEPGLMGARGLPGSPGNVGPAGKEGPGLPGIDGRPGPIGPAGARGEAGNIGFPGPKGPAGDPGGHAGLAGNRGAPGPDGNNGAQGPPGLQGVQGGKGEQGPAGPPGFQGLPGPAGTTGEAGKPGERGIPGEFGLPGPAGPRGERGPPGESGAVGPSGAIGSRGPSGPPGPDGNKGEPGVVGAPGTAGPAGSGGLPGERGAAGIPGGKGEKGETGLRGEVGTTGRDGARGAPGAVGAPGPAGATGDRGEAGAAGPAGPAGPRGSPGERGEVGPAGPNGFAGPAGAAGQPGAKGERGTKGPKGENGIVGPTGPVGSAGPAGPNGPAGPAGSRGDGGPPGVTGFPGAAGRTGPPGPSGITGPPGPPGAAGKGDQGPVGRGETGAGGPPGFTGEKGPSGEPGTAGPPGTAGPQGLLGAPGILGLPGSRGERGLPGVAGAVGEPGPLGIGPPGARGGKHGNRGEPGPVGSVGPVGALGPRGPSGPQGIRGDKGEPGEKGPRGLPGGLQGLPGLAGQHGDQGSPGPVGPAGPRGPAGPSGPPGKDGRTGHPGAVGPAGIRGSQGSQGPSGPAGPPGPPGPPGASGGGYDFGYEGDFYRA</sequence>
<feature type="chain" id="PRO_0000448451" description="Collagen alpha-2(I) chain">
    <location>
        <begin position="1"/>
        <end position="925"/>
    </location>
</feature>
<feature type="region of interest" description="Disordered" evidence="2">
    <location>
        <begin position="1"/>
        <end position="925"/>
    </location>
</feature>
<feature type="compositionally biased region" description="Gly residues" evidence="2">
    <location>
        <begin position="22"/>
        <end position="34"/>
    </location>
</feature>
<feature type="compositionally biased region" description="Low complexity" evidence="2">
    <location>
        <begin position="35"/>
        <end position="74"/>
    </location>
</feature>
<feature type="compositionally biased region" description="Low complexity" evidence="2">
    <location>
        <begin position="154"/>
        <end position="171"/>
    </location>
</feature>
<feature type="compositionally biased region" description="Gly residues" evidence="2">
    <location>
        <begin position="271"/>
        <end position="280"/>
    </location>
</feature>
<feature type="compositionally biased region" description="Low complexity" evidence="2">
    <location>
        <begin position="281"/>
        <end position="291"/>
    </location>
</feature>
<feature type="compositionally biased region" description="Gly residues" evidence="2">
    <location>
        <begin position="306"/>
        <end position="315"/>
    </location>
</feature>
<feature type="compositionally biased region" description="Low complexity" evidence="2">
    <location>
        <begin position="363"/>
        <end position="379"/>
    </location>
</feature>
<feature type="compositionally biased region" description="Gly residues" evidence="2">
    <location>
        <begin position="423"/>
        <end position="432"/>
    </location>
</feature>
<feature type="compositionally biased region" description="Low complexity" evidence="2">
    <location>
        <begin position="479"/>
        <end position="496"/>
    </location>
</feature>
<feature type="compositionally biased region" description="Low complexity" evidence="2">
    <location>
        <begin position="508"/>
        <end position="518"/>
    </location>
</feature>
<feature type="compositionally biased region" description="Gly residues" evidence="2">
    <location>
        <begin position="519"/>
        <end position="528"/>
    </location>
</feature>
<feature type="compositionally biased region" description="Low complexity" evidence="2">
    <location>
        <begin position="551"/>
        <end position="595"/>
    </location>
</feature>
<feature type="compositionally biased region" description="Low complexity" evidence="2">
    <location>
        <begin position="602"/>
        <end position="622"/>
    </location>
</feature>
<feature type="compositionally biased region" description="Basic and acidic residues" evidence="2">
    <location>
        <begin position="623"/>
        <end position="632"/>
    </location>
</feature>
<feature type="compositionally biased region" description="Low complexity" evidence="2">
    <location>
        <begin position="640"/>
        <end position="650"/>
    </location>
</feature>
<feature type="compositionally biased region" description="Gly residues" evidence="2">
    <location>
        <begin position="660"/>
        <end position="669"/>
    </location>
</feature>
<feature type="compositionally biased region" description="Low complexity" evidence="2">
    <location>
        <begin position="671"/>
        <end position="680"/>
    </location>
</feature>
<feature type="compositionally biased region" description="Gly residues" evidence="2">
    <location>
        <begin position="696"/>
        <end position="718"/>
    </location>
</feature>
<feature type="compositionally biased region" description="Low complexity" evidence="2">
    <location>
        <begin position="719"/>
        <end position="753"/>
    </location>
</feature>
<feature type="compositionally biased region" description="Low complexity" evidence="2">
    <location>
        <begin position="761"/>
        <end position="771"/>
    </location>
</feature>
<feature type="compositionally biased region" description="Gly residues" evidence="2">
    <location>
        <begin position="772"/>
        <end position="782"/>
    </location>
</feature>
<feature type="compositionally biased region" description="Low complexity" evidence="2">
    <location>
        <begin position="791"/>
        <end position="806"/>
    </location>
</feature>
<feature type="compositionally biased region" description="Basic and acidic residues" evidence="2">
    <location>
        <begin position="816"/>
        <end position="827"/>
    </location>
</feature>
<feature type="compositionally biased region" description="Pro residues" evidence="2">
    <location>
        <begin position="897"/>
        <end position="907"/>
    </location>
</feature>
<feature type="modified residue" description="4-hydroxyproline" evidence="1">
    <location>
        <position position="10"/>
    </location>
</feature>
<feature type="modified residue" description="4-hydroxyproline" evidence="1">
    <location>
        <position position="13"/>
    </location>
</feature>
<feature type="modified residue" description="4-hydroxyproline" evidence="1">
    <location>
        <position position="42"/>
    </location>
</feature>
<feature type="modified residue" description="4-hydroxyproline" evidence="1">
    <location>
        <position position="48"/>
    </location>
</feature>
<feature type="modified residue" description="5-hydroxylysine; alternate" evidence="1">
    <location>
        <position position="103"/>
    </location>
</feature>
<feature type="modified residue" description="4-hydroxyproline" evidence="1">
    <location>
        <position position="317"/>
    </location>
</feature>
<feature type="modified residue" description="4-hydroxyproline" evidence="1">
    <location>
        <position position="332"/>
    </location>
</feature>
<feature type="modified residue" description="4-hydroxyproline" evidence="1">
    <location>
        <position position="335"/>
    </location>
</feature>
<feature type="glycosylation site" description="O-linked (Gal...) hydroxylysine; alternate" evidence="1">
    <location>
        <position position="103"/>
    </location>
</feature>
<feature type="unsure residue" description="L or I" evidence="4">
    <location>
        <position position="9"/>
    </location>
</feature>
<feature type="unsure residue" description="L or I" evidence="4">
    <location>
        <position position="28"/>
    </location>
</feature>
<feature type="unsure residue" description="L or I" evidence="4">
    <location>
        <position position="35"/>
    </location>
</feature>
<feature type="unsure residue" description="L or I" evidence="4">
    <location>
        <position position="99"/>
    </location>
</feature>
<feature type="unsure residue" description="L or I" evidence="4">
    <location>
        <position position="111"/>
    </location>
</feature>
<feature type="unsure residue" description="L or I" evidence="4">
    <location>
        <position position="114"/>
    </location>
</feature>
<feature type="unsure residue" description="L or I" evidence="4">
    <location>
        <position position="144"/>
    </location>
</feature>
<feature type="unsure residue" description="L or I" evidence="4">
    <location>
        <position position="184"/>
    </location>
</feature>
<feature type="unsure residue" description="L or I" evidence="4">
    <location>
        <position position="204"/>
    </location>
</feature>
<feature type="unsure residue" description="L or I" evidence="4">
    <location>
        <position position="222"/>
    </location>
</feature>
<feature type="unsure residue" description="L or I" evidence="4">
    <location>
        <position position="230"/>
    </location>
</feature>
<feature type="unsure residue" description="L or I" evidence="4">
    <location>
        <position position="239"/>
    </location>
</feature>
<feature type="unsure residue" description="L or I" evidence="4">
    <location>
        <position position="260"/>
    </location>
</feature>
<feature type="unsure residue" description="L or I" evidence="4">
    <location>
        <position position="307"/>
    </location>
</feature>
<feature type="unsure residue" description="L or I" evidence="4">
    <location>
        <position position="316"/>
    </location>
</feature>
<feature type="unsure residue" description="L or I" evidence="4">
    <location>
        <position position="337"/>
    </location>
</feature>
<feature type="unsure residue" description="L or I" evidence="4">
    <location>
        <position position="343"/>
    </location>
</feature>
<feature type="unsure residue" description="L or I" evidence="4">
    <location>
        <position position="360"/>
    </location>
</feature>
<feature type="unsure residue" description="L or I" evidence="4">
    <location>
        <position position="400"/>
    </location>
</feature>
<feature type="unsure residue" description="L or I" evidence="4">
    <location>
        <position position="421"/>
    </location>
</feature>
<feature type="unsure residue" description="L or I" evidence="4">
    <location>
        <position position="442"/>
    </location>
</feature>
<feature type="unsure residue" description="L or I" evidence="4">
    <location>
        <position position="466"/>
    </location>
</feature>
<feature type="unsure residue" description="L or I" evidence="4">
    <location>
        <position position="526"/>
    </location>
</feature>
<feature type="unsure residue" description="L or I" evidence="4">
    <location>
        <position position="547"/>
    </location>
</feature>
<feature type="unsure residue" description="L or I" evidence="4">
    <location>
        <position position="743"/>
    </location>
</feature>
<feature type="unsure residue" description="L or I" evidence="4">
    <location>
        <position position="744"/>
    </location>
</feature>
<feature type="unsure residue" description="L or I" evidence="4">
    <location>
        <position position="750"/>
    </location>
</feature>
<feature type="unsure residue" description="L or I" evidence="4">
    <location>
        <position position="752"/>
    </location>
</feature>
<feature type="unsure residue" description="L or I" evidence="4">
    <location>
        <position position="761"/>
    </location>
</feature>
<feature type="unsure residue" description="L or I" evidence="4">
    <location>
        <position position="774"/>
    </location>
</feature>
<feature type="unsure residue" description="L or I" evidence="4">
    <location>
        <position position="804"/>
    </location>
</feature>
<feature type="unsure residue" description="L or I" evidence="4">
    <location>
        <position position="830"/>
    </location>
</feature>
<feature type="unsure residue" description="L or I" evidence="4">
    <location>
        <position position="834"/>
    </location>
</feature>
<feature type="unsure residue" description="L or I" evidence="4">
    <location>
        <position position="837"/>
    </location>
</feature>
<feature type="unsure residue" description="L or I" evidence="4">
    <location>
        <position position="840"/>
    </location>
</feature>
<feature type="non-consecutive residues" evidence="4">
    <location>
        <begin position="24"/>
        <end position="25"/>
    </location>
</feature>
<feature type="non-consecutive residues" evidence="4">
    <location>
        <begin position="82"/>
        <end position="83"/>
    </location>
</feature>
<feature type="non-consecutive residues" evidence="4">
    <location>
        <begin position="150"/>
        <end position="151"/>
    </location>
</feature>
<feature type="non-consecutive residues" evidence="4">
    <location>
        <begin position="224"/>
        <end position="225"/>
    </location>
</feature>
<feature type="non-consecutive residues" evidence="4">
    <location>
        <begin position="297"/>
        <end position="298"/>
    </location>
</feature>
<feature type="non-consecutive residues" evidence="4">
    <location>
        <begin position="322"/>
        <end position="323"/>
    </location>
</feature>
<feature type="non-consecutive residues" evidence="4">
    <location>
        <begin position="358"/>
        <end position="359"/>
    </location>
</feature>
<feature type="non-consecutive residues" evidence="4">
    <location>
        <begin position="395"/>
        <end position="396"/>
    </location>
</feature>
<feature type="non-consecutive residues" evidence="4">
    <location>
        <begin position="700"/>
        <end position="701"/>
    </location>
</feature>
<feature type="non-consecutive residues" evidence="4">
    <location>
        <begin position="708"/>
        <end position="709"/>
    </location>
</feature>
<feature type="non-consecutive residues" evidence="4">
    <location>
        <begin position="776"/>
        <end position="777"/>
    </location>
</feature>
<feature type="non-consecutive residues" evidence="4">
    <location>
        <begin position="783"/>
        <end position="784"/>
    </location>
</feature>
<feature type="non-consecutive residues" evidence="4">
    <location>
        <begin position="832"/>
        <end position="833"/>
    </location>
</feature>
<feature type="non-terminal residue" evidence="4">
    <location>
        <position position="1"/>
    </location>
</feature>
<feature type="non-terminal residue" evidence="4">
    <location>
        <position position="925"/>
    </location>
</feature>
<name>CO1A2_ACRSX</name>
<organism evidence="4">
    <name type="scientific">Acratocnus sp. (strain SLP-2019)</name>
    <name type="common">Ground sloth</name>
    <dbReference type="NCBI Taxonomy" id="2546662"/>
    <lineage>
        <taxon>Eukaryota</taxon>
        <taxon>Metazoa</taxon>
        <taxon>Chordata</taxon>
        <taxon>Craniata</taxon>
        <taxon>Vertebrata</taxon>
        <taxon>Euteleostomi</taxon>
        <taxon>Mammalia</taxon>
        <taxon>Eutheria</taxon>
        <taxon>Xenarthra</taxon>
        <taxon>Pilosa</taxon>
        <taxon>Folivora</taxon>
        <taxon>Megalonychidae</taxon>
        <taxon>Acratocnus</taxon>
    </lineage>
</organism>
<proteinExistence type="evidence at protein level"/>
<protein>
    <recommendedName>
        <fullName evidence="4">Collagen alpha-2(I) chain</fullName>
    </recommendedName>
    <alternativeName>
        <fullName evidence="1">Alpha-2 type I collagen</fullName>
    </alternativeName>
</protein>
<dbReference type="GO" id="GO:0031012">
    <property type="term" value="C:extracellular matrix"/>
    <property type="evidence" value="ECO:0007669"/>
    <property type="project" value="TreeGrafter"/>
</dbReference>
<dbReference type="GO" id="GO:0005615">
    <property type="term" value="C:extracellular space"/>
    <property type="evidence" value="ECO:0007669"/>
    <property type="project" value="TreeGrafter"/>
</dbReference>
<dbReference type="InterPro" id="IPR008160">
    <property type="entry name" value="Collagen"/>
</dbReference>
<dbReference type="InterPro" id="IPR050149">
    <property type="entry name" value="Collagen_superfamily"/>
</dbReference>
<dbReference type="PANTHER" id="PTHR24023">
    <property type="entry name" value="COLLAGEN ALPHA"/>
    <property type="match status" value="1"/>
</dbReference>
<dbReference type="PANTHER" id="PTHR24023:SF1082">
    <property type="entry name" value="COLLAGEN TRIPLE HELIX REPEAT"/>
    <property type="match status" value="1"/>
</dbReference>
<dbReference type="Pfam" id="PF01391">
    <property type="entry name" value="Collagen"/>
    <property type="match status" value="5"/>
</dbReference>
<reference evidence="5" key="1">
    <citation type="journal article" date="2019" name="Nat. Ecol. Evol.">
        <title>Palaeoproteomics resolves sloth relationships.</title>
        <authorList>
            <person name="Presslee S."/>
            <person name="Slater G.J."/>
            <person name="Pujos F."/>
            <person name="Forasiepi A.M."/>
            <person name="Fischer R."/>
            <person name="Molloy K."/>
            <person name="Mackie M."/>
            <person name="Olsen J.V."/>
            <person name="Kramarz A."/>
            <person name="Taglioretti M."/>
            <person name="Scaglia F."/>
            <person name="Lezcano M."/>
            <person name="Lanata J.L."/>
            <person name="Southon J."/>
            <person name="Feranec R."/>
            <person name="Bloch J."/>
            <person name="Hajduk A."/>
            <person name="Martin F.M."/>
            <person name="Salas Gismondi R."/>
            <person name="Reguero M."/>
            <person name="de Muizon C."/>
            <person name="Greenwood A."/>
            <person name="Chait B.T."/>
            <person name="Penkman K."/>
            <person name="Collins M."/>
            <person name="MacPhee R.D.E."/>
        </authorList>
    </citation>
    <scope>PROTEIN SEQUENCE</scope>
    <scope>TISSUE SPECIFICITY</scope>
    <scope>IDENTIFICATION BY MASS SPECTROMETRY</scope>
    <source>
        <tissue evidence="4">Bone</tissue>
    </source>
</reference>
<comment type="function">
    <text evidence="5">Type I collagen is a member of group I collagen (fibrillar forming collagen).</text>
</comment>
<comment type="subunit">
    <text evidence="1">Trimers of one alpha 2(I) and two alpha 1(I) chains. Interacts (via C-terminus) with TMEM131 (via PapD-L domain); the interaction is direct and is involved in assembly and TRAPPIII ER-to-Golgi transport complex-dependent secretion of collagen.</text>
</comment>
<comment type="subcellular location">
    <subcellularLocation>
        <location>Secreted</location>
    </subcellularLocation>
    <subcellularLocation>
        <location>Secreted</location>
        <location>Extracellular space</location>
    </subcellularLocation>
    <subcellularLocation>
        <location evidence="5">Secreted</location>
        <location evidence="5">Extracellular space</location>
        <location evidence="5">Extracellular matrix</location>
    </subcellularLocation>
</comment>
<comment type="tissue specificity">
    <text evidence="3">Expressed in bones.</text>
</comment>
<comment type="PTM">
    <text evidence="1">Prolines at the third position of the tripeptide repeating unit (G-X-Y) are hydroxylated in some or all of the chains.</text>
</comment>
<comment type="miscellaneous">
    <text evidence="3">These protein fragments were extracted from an ancient mandible bone collected in Haiti.</text>
</comment>
<comment type="similarity">
    <text evidence="5">Belongs to the fibrillar collagen family.</text>
</comment>